<evidence type="ECO:0000255" key="1">
    <source>
        <dbReference type="HAMAP-Rule" id="MF_00381"/>
    </source>
</evidence>
<organism>
    <name type="scientific">Aliivibrio fischeri (strain MJ11)</name>
    <name type="common">Vibrio fischeri</name>
    <dbReference type="NCBI Taxonomy" id="388396"/>
    <lineage>
        <taxon>Bacteria</taxon>
        <taxon>Pseudomonadati</taxon>
        <taxon>Pseudomonadota</taxon>
        <taxon>Gammaproteobacteria</taxon>
        <taxon>Vibrionales</taxon>
        <taxon>Vibrionaceae</taxon>
        <taxon>Aliivibrio</taxon>
    </lineage>
</organism>
<dbReference type="EMBL" id="CP001139">
    <property type="protein sequence ID" value="ACH65296.1"/>
    <property type="molecule type" value="Genomic_DNA"/>
</dbReference>
<dbReference type="RefSeq" id="WP_005420161.1">
    <property type="nucleotide sequence ID" value="NC_011184.1"/>
</dbReference>
<dbReference type="SMR" id="B5FG57"/>
<dbReference type="GeneID" id="54164457"/>
<dbReference type="KEGG" id="vfm:VFMJ11_1885"/>
<dbReference type="HOGENOM" id="CLU_105066_2_0_6"/>
<dbReference type="Proteomes" id="UP000001857">
    <property type="component" value="Chromosome I"/>
</dbReference>
<dbReference type="GO" id="GO:0005694">
    <property type="term" value="C:chromosome"/>
    <property type="evidence" value="ECO:0007669"/>
    <property type="project" value="InterPro"/>
</dbReference>
<dbReference type="GO" id="GO:0005829">
    <property type="term" value="C:cytosol"/>
    <property type="evidence" value="ECO:0007669"/>
    <property type="project" value="TreeGrafter"/>
</dbReference>
<dbReference type="GO" id="GO:0003677">
    <property type="term" value="F:DNA binding"/>
    <property type="evidence" value="ECO:0007669"/>
    <property type="project" value="UniProtKB-UniRule"/>
</dbReference>
<dbReference type="GO" id="GO:0030527">
    <property type="term" value="F:structural constituent of chromatin"/>
    <property type="evidence" value="ECO:0007669"/>
    <property type="project" value="InterPro"/>
</dbReference>
<dbReference type="GO" id="GO:0006310">
    <property type="term" value="P:DNA recombination"/>
    <property type="evidence" value="ECO:0007669"/>
    <property type="project" value="UniProtKB-UniRule"/>
</dbReference>
<dbReference type="GO" id="GO:0006355">
    <property type="term" value="P:regulation of DNA-templated transcription"/>
    <property type="evidence" value="ECO:0007669"/>
    <property type="project" value="UniProtKB-UniRule"/>
</dbReference>
<dbReference type="GO" id="GO:0006417">
    <property type="term" value="P:regulation of translation"/>
    <property type="evidence" value="ECO:0007669"/>
    <property type="project" value="UniProtKB-UniRule"/>
</dbReference>
<dbReference type="CDD" id="cd13836">
    <property type="entry name" value="IHF_B"/>
    <property type="match status" value="1"/>
</dbReference>
<dbReference type="FunFam" id="4.10.520.10:FF:000003">
    <property type="entry name" value="Integration host factor subunit beta"/>
    <property type="match status" value="1"/>
</dbReference>
<dbReference type="Gene3D" id="4.10.520.10">
    <property type="entry name" value="IHF-like DNA-binding proteins"/>
    <property type="match status" value="1"/>
</dbReference>
<dbReference type="HAMAP" id="MF_00381">
    <property type="entry name" value="IHF_beta"/>
    <property type="match status" value="1"/>
</dbReference>
<dbReference type="InterPro" id="IPR000119">
    <property type="entry name" value="Hist_DNA-bd"/>
</dbReference>
<dbReference type="InterPro" id="IPR020816">
    <property type="entry name" value="Histone-like_DNA-bd_CS"/>
</dbReference>
<dbReference type="InterPro" id="IPR010992">
    <property type="entry name" value="IHF-like_DNA-bd_dom_sf"/>
</dbReference>
<dbReference type="InterPro" id="IPR005685">
    <property type="entry name" value="IHF_beta"/>
</dbReference>
<dbReference type="NCBIfam" id="TIGR00988">
    <property type="entry name" value="hip"/>
    <property type="match status" value="1"/>
</dbReference>
<dbReference type="NCBIfam" id="NF001222">
    <property type="entry name" value="PRK00199.1"/>
    <property type="match status" value="1"/>
</dbReference>
<dbReference type="PANTHER" id="PTHR33175">
    <property type="entry name" value="DNA-BINDING PROTEIN HU"/>
    <property type="match status" value="1"/>
</dbReference>
<dbReference type="PANTHER" id="PTHR33175:SF5">
    <property type="entry name" value="INTEGRATION HOST FACTOR SUBUNIT BETA"/>
    <property type="match status" value="1"/>
</dbReference>
<dbReference type="Pfam" id="PF00216">
    <property type="entry name" value="Bac_DNA_binding"/>
    <property type="match status" value="1"/>
</dbReference>
<dbReference type="PRINTS" id="PR01727">
    <property type="entry name" value="DNABINDINGHU"/>
</dbReference>
<dbReference type="SMART" id="SM00411">
    <property type="entry name" value="BHL"/>
    <property type="match status" value="1"/>
</dbReference>
<dbReference type="SUPFAM" id="SSF47729">
    <property type="entry name" value="IHF-like DNA-binding proteins"/>
    <property type="match status" value="1"/>
</dbReference>
<dbReference type="PROSITE" id="PS00045">
    <property type="entry name" value="HISTONE_LIKE"/>
    <property type="match status" value="1"/>
</dbReference>
<gene>
    <name evidence="1" type="primary">ihfB</name>
    <name evidence="1" type="synonym">himD</name>
    <name type="ordered locus">VFMJ11_1885</name>
</gene>
<comment type="function">
    <text evidence="1">This protein is one of the two subunits of integration host factor, a specific DNA-binding protein that functions in genetic recombination as well as in transcriptional and translational control.</text>
</comment>
<comment type="subunit">
    <text evidence="1">Heterodimer of an alpha and a beta chain.</text>
</comment>
<comment type="similarity">
    <text evidence="1">Belongs to the bacterial histone-like protein family.</text>
</comment>
<keyword id="KW-0233">DNA recombination</keyword>
<keyword id="KW-0238">DNA-binding</keyword>
<keyword id="KW-0804">Transcription</keyword>
<keyword id="KW-0805">Transcription regulation</keyword>
<keyword id="KW-0810">Translation regulation</keyword>
<proteinExistence type="inferred from homology"/>
<name>IHFB_ALIFM</name>
<accession>B5FG57</accession>
<protein>
    <recommendedName>
        <fullName evidence="1">Integration host factor subunit beta</fullName>
        <shortName evidence="1">IHF-beta</shortName>
    </recommendedName>
</protein>
<feature type="chain" id="PRO_1000122247" description="Integration host factor subunit beta">
    <location>
        <begin position="1"/>
        <end position="93"/>
    </location>
</feature>
<reference key="1">
    <citation type="submission" date="2008-08" db="EMBL/GenBank/DDBJ databases">
        <title>Complete sequence of Vibrio fischeri strain MJ11.</title>
        <authorList>
            <person name="Mandel M.J."/>
            <person name="Stabb E.V."/>
            <person name="Ruby E.G."/>
            <person name="Ferriera S."/>
            <person name="Johnson J."/>
            <person name="Kravitz S."/>
            <person name="Beeson K."/>
            <person name="Sutton G."/>
            <person name="Rogers Y.-H."/>
            <person name="Friedman R."/>
            <person name="Frazier M."/>
            <person name="Venter J.C."/>
        </authorList>
    </citation>
    <scope>NUCLEOTIDE SEQUENCE [LARGE SCALE GENOMIC DNA]</scope>
    <source>
        <strain>MJ11</strain>
    </source>
</reference>
<sequence>MTKSELIEQLCSKKPQLSAKQVEDTVKEILEQMATTLEGGDRIEIRGFGSFSLHYREPRLGRNPKTGDKVELDGKFVPHFKPGKELRERVNYS</sequence>